<organism>
    <name type="scientific">Desulforamulus reducens (strain ATCC BAA-1160 / DSM 100696 / MI-1)</name>
    <name type="common">Desulfotomaculum reducens</name>
    <dbReference type="NCBI Taxonomy" id="349161"/>
    <lineage>
        <taxon>Bacteria</taxon>
        <taxon>Bacillati</taxon>
        <taxon>Bacillota</taxon>
        <taxon>Clostridia</taxon>
        <taxon>Eubacteriales</taxon>
        <taxon>Peptococcaceae</taxon>
        <taxon>Desulforamulus</taxon>
    </lineage>
</organism>
<gene>
    <name evidence="1" type="primary">proA</name>
    <name type="ordered locus">Dred_1169</name>
</gene>
<dbReference type="EC" id="1.2.1.41" evidence="1"/>
<dbReference type="EMBL" id="CP000612">
    <property type="protein sequence ID" value="ABO49703.1"/>
    <property type="molecule type" value="Genomic_DNA"/>
</dbReference>
<dbReference type="RefSeq" id="WP_011877529.1">
    <property type="nucleotide sequence ID" value="NC_009253.1"/>
</dbReference>
<dbReference type="SMR" id="A4J3Q0"/>
<dbReference type="STRING" id="349161.Dred_1169"/>
<dbReference type="KEGG" id="drm:Dred_1169"/>
<dbReference type="eggNOG" id="COG0014">
    <property type="taxonomic scope" value="Bacteria"/>
</dbReference>
<dbReference type="HOGENOM" id="CLU_030231_0_0_9"/>
<dbReference type="OrthoDB" id="9809970at2"/>
<dbReference type="UniPathway" id="UPA00098">
    <property type="reaction ID" value="UER00360"/>
</dbReference>
<dbReference type="Proteomes" id="UP000001556">
    <property type="component" value="Chromosome"/>
</dbReference>
<dbReference type="GO" id="GO:0005737">
    <property type="term" value="C:cytoplasm"/>
    <property type="evidence" value="ECO:0007669"/>
    <property type="project" value="UniProtKB-SubCell"/>
</dbReference>
<dbReference type="GO" id="GO:0004350">
    <property type="term" value="F:glutamate-5-semialdehyde dehydrogenase activity"/>
    <property type="evidence" value="ECO:0007669"/>
    <property type="project" value="UniProtKB-UniRule"/>
</dbReference>
<dbReference type="GO" id="GO:0050661">
    <property type="term" value="F:NADP binding"/>
    <property type="evidence" value="ECO:0007669"/>
    <property type="project" value="InterPro"/>
</dbReference>
<dbReference type="GO" id="GO:0055129">
    <property type="term" value="P:L-proline biosynthetic process"/>
    <property type="evidence" value="ECO:0007669"/>
    <property type="project" value="UniProtKB-UniRule"/>
</dbReference>
<dbReference type="CDD" id="cd07079">
    <property type="entry name" value="ALDH_F18-19_ProA-GPR"/>
    <property type="match status" value="1"/>
</dbReference>
<dbReference type="FunFam" id="3.40.309.10:FF:000006">
    <property type="entry name" value="Gamma-glutamyl phosphate reductase"/>
    <property type="match status" value="1"/>
</dbReference>
<dbReference type="Gene3D" id="3.40.605.10">
    <property type="entry name" value="Aldehyde Dehydrogenase, Chain A, domain 1"/>
    <property type="match status" value="1"/>
</dbReference>
<dbReference type="Gene3D" id="3.40.309.10">
    <property type="entry name" value="Aldehyde Dehydrogenase, Chain A, domain 2"/>
    <property type="match status" value="1"/>
</dbReference>
<dbReference type="HAMAP" id="MF_00412">
    <property type="entry name" value="ProA"/>
    <property type="match status" value="1"/>
</dbReference>
<dbReference type="InterPro" id="IPR016161">
    <property type="entry name" value="Ald_DH/histidinol_DH"/>
</dbReference>
<dbReference type="InterPro" id="IPR016163">
    <property type="entry name" value="Ald_DH_C"/>
</dbReference>
<dbReference type="InterPro" id="IPR016162">
    <property type="entry name" value="Ald_DH_N"/>
</dbReference>
<dbReference type="InterPro" id="IPR015590">
    <property type="entry name" value="Aldehyde_DH_dom"/>
</dbReference>
<dbReference type="InterPro" id="IPR020593">
    <property type="entry name" value="G-glutamylP_reductase_CS"/>
</dbReference>
<dbReference type="InterPro" id="IPR012134">
    <property type="entry name" value="Glu-5-SA_DH"/>
</dbReference>
<dbReference type="InterPro" id="IPR000965">
    <property type="entry name" value="GPR_dom"/>
</dbReference>
<dbReference type="NCBIfam" id="NF001221">
    <property type="entry name" value="PRK00197.1"/>
    <property type="match status" value="1"/>
</dbReference>
<dbReference type="NCBIfam" id="TIGR00407">
    <property type="entry name" value="proA"/>
    <property type="match status" value="1"/>
</dbReference>
<dbReference type="PANTHER" id="PTHR11063:SF8">
    <property type="entry name" value="DELTA-1-PYRROLINE-5-CARBOXYLATE SYNTHASE"/>
    <property type="match status" value="1"/>
</dbReference>
<dbReference type="PANTHER" id="PTHR11063">
    <property type="entry name" value="GLUTAMATE SEMIALDEHYDE DEHYDROGENASE"/>
    <property type="match status" value="1"/>
</dbReference>
<dbReference type="Pfam" id="PF00171">
    <property type="entry name" value="Aldedh"/>
    <property type="match status" value="2"/>
</dbReference>
<dbReference type="PIRSF" id="PIRSF000151">
    <property type="entry name" value="GPR"/>
    <property type="match status" value="1"/>
</dbReference>
<dbReference type="SUPFAM" id="SSF53720">
    <property type="entry name" value="ALDH-like"/>
    <property type="match status" value="1"/>
</dbReference>
<dbReference type="PROSITE" id="PS01223">
    <property type="entry name" value="PROA"/>
    <property type="match status" value="1"/>
</dbReference>
<keyword id="KW-0028">Amino-acid biosynthesis</keyword>
<keyword id="KW-0963">Cytoplasm</keyword>
<keyword id="KW-0521">NADP</keyword>
<keyword id="KW-0560">Oxidoreductase</keyword>
<keyword id="KW-0641">Proline biosynthesis</keyword>
<keyword id="KW-1185">Reference proteome</keyword>
<sequence length="415" mass="44463">MSNVKNLAKKAKIAARTLSVLDTEAKNSALEAIASQLLADKETILQANGKDLDNGKKMGLSPSLLDRLALTSARIDGMVEGIKQVVELEDPVGQVMETWQRPNGLEIAKVRVPMGVIGMVYEARPNVTVDTCALCLKAGSAVVLRGSSSALNSNRALVSAIKKGLAKTAIPEDTVQFVDSEDRGAVDEMLRLNGLLDLVIPRGGAGLIRRVVENATVPVIETGVGNCHVYVDVDADPGMALEILLNAKCQRYGVCNAAESLLVHEGIAANWLPGAVQELNTRGVEIRGCSKVVEILSGVKKAEDSDWATEFLSPVLAIKVVKDFQDALDHIQQYSSGHSESIVTNNQNTAAEFLRQVDAAAVYHNASTRFTDGFEYGFGAEIGISTQKLHARGPMGLRELTSYKYVVKGTGQVRP</sequence>
<evidence type="ECO:0000255" key="1">
    <source>
        <dbReference type="HAMAP-Rule" id="MF_00412"/>
    </source>
</evidence>
<comment type="function">
    <text evidence="1">Catalyzes the NADPH-dependent reduction of L-glutamate 5-phosphate into L-glutamate 5-semialdehyde and phosphate. The product spontaneously undergoes cyclization to form 1-pyrroline-5-carboxylate.</text>
</comment>
<comment type="catalytic activity">
    <reaction evidence="1">
        <text>L-glutamate 5-semialdehyde + phosphate + NADP(+) = L-glutamyl 5-phosphate + NADPH + H(+)</text>
        <dbReference type="Rhea" id="RHEA:19541"/>
        <dbReference type="ChEBI" id="CHEBI:15378"/>
        <dbReference type="ChEBI" id="CHEBI:43474"/>
        <dbReference type="ChEBI" id="CHEBI:57783"/>
        <dbReference type="ChEBI" id="CHEBI:58066"/>
        <dbReference type="ChEBI" id="CHEBI:58274"/>
        <dbReference type="ChEBI" id="CHEBI:58349"/>
        <dbReference type="EC" id="1.2.1.41"/>
    </reaction>
</comment>
<comment type="pathway">
    <text evidence="1">Amino-acid biosynthesis; L-proline biosynthesis; L-glutamate 5-semialdehyde from L-glutamate: step 2/2.</text>
</comment>
<comment type="subcellular location">
    <subcellularLocation>
        <location evidence="1">Cytoplasm</location>
    </subcellularLocation>
</comment>
<comment type="similarity">
    <text evidence="1">Belongs to the gamma-glutamyl phosphate reductase family.</text>
</comment>
<name>PROA_DESRM</name>
<reference key="1">
    <citation type="submission" date="2007-03" db="EMBL/GenBank/DDBJ databases">
        <title>Complete sequence of Desulfotomaculum reducens MI-1.</title>
        <authorList>
            <consortium name="US DOE Joint Genome Institute"/>
            <person name="Copeland A."/>
            <person name="Lucas S."/>
            <person name="Lapidus A."/>
            <person name="Barry K."/>
            <person name="Detter J.C."/>
            <person name="Glavina del Rio T."/>
            <person name="Hammon N."/>
            <person name="Israni S."/>
            <person name="Dalin E."/>
            <person name="Tice H."/>
            <person name="Pitluck S."/>
            <person name="Sims D."/>
            <person name="Brettin T."/>
            <person name="Bruce D."/>
            <person name="Han C."/>
            <person name="Tapia R."/>
            <person name="Schmutz J."/>
            <person name="Larimer F."/>
            <person name="Land M."/>
            <person name="Hauser L."/>
            <person name="Kyrpides N."/>
            <person name="Kim E."/>
            <person name="Tebo B.M."/>
            <person name="Richardson P."/>
        </authorList>
    </citation>
    <scope>NUCLEOTIDE SEQUENCE [LARGE SCALE GENOMIC DNA]</scope>
    <source>
        <strain>ATCC BAA-1160 / DSM 100696 / MI-1</strain>
    </source>
</reference>
<accession>A4J3Q0</accession>
<feature type="chain" id="PRO_1000072278" description="Gamma-glutamyl phosphate reductase">
    <location>
        <begin position="1"/>
        <end position="415"/>
    </location>
</feature>
<proteinExistence type="inferred from homology"/>
<protein>
    <recommendedName>
        <fullName evidence="1">Gamma-glutamyl phosphate reductase</fullName>
        <shortName evidence="1">GPR</shortName>
        <ecNumber evidence="1">1.2.1.41</ecNumber>
    </recommendedName>
    <alternativeName>
        <fullName evidence="1">Glutamate-5-semialdehyde dehydrogenase</fullName>
    </alternativeName>
    <alternativeName>
        <fullName evidence="1">Glutamyl-gamma-semialdehyde dehydrogenase</fullName>
        <shortName evidence="1">GSA dehydrogenase</shortName>
    </alternativeName>
</protein>